<accession>P34625</accession>
<gene>
    <name type="ORF">ZK353.2</name>
</gene>
<feature type="chain" id="PRO_0000065510" description="Uncharacterized protein ZK353.2">
    <location>
        <begin position="1"/>
        <end position="99"/>
    </location>
</feature>
<protein>
    <recommendedName>
        <fullName>Uncharacterized protein ZK353.2</fullName>
    </recommendedName>
</protein>
<dbReference type="EMBL" id="FO081668">
    <property type="protein sequence ID" value="CCD73202.1"/>
    <property type="molecule type" value="Genomic_DNA"/>
</dbReference>
<dbReference type="PIR" id="S44658">
    <property type="entry name" value="S44658"/>
</dbReference>
<dbReference type="RefSeq" id="NP_498853.1">
    <property type="nucleotide sequence ID" value="NM_066452.2"/>
</dbReference>
<dbReference type="SMR" id="P34625"/>
<dbReference type="FunCoup" id="P34625">
    <property type="interactions" value="1522"/>
</dbReference>
<dbReference type="STRING" id="6239.ZK353.2.1"/>
<dbReference type="PaxDb" id="6239-ZK353.2"/>
<dbReference type="PeptideAtlas" id="P34625"/>
<dbReference type="EnsemblMetazoa" id="ZK353.2.1">
    <property type="protein sequence ID" value="ZK353.2.1"/>
    <property type="gene ID" value="WBGene00022698"/>
</dbReference>
<dbReference type="GeneID" id="191286"/>
<dbReference type="KEGG" id="cel:CELE_ZK353.2"/>
<dbReference type="UCSC" id="ZK353.2">
    <property type="organism name" value="c. elegans"/>
</dbReference>
<dbReference type="AGR" id="WB:WBGene00022698"/>
<dbReference type="CTD" id="191286"/>
<dbReference type="WormBase" id="ZK353.2">
    <property type="protein sequence ID" value="CE00386"/>
    <property type="gene ID" value="WBGene00022698"/>
</dbReference>
<dbReference type="eggNOG" id="ENOG502TI55">
    <property type="taxonomic scope" value="Eukaryota"/>
</dbReference>
<dbReference type="HOGENOM" id="CLU_2401614_0_0_1"/>
<dbReference type="InParanoid" id="P34625"/>
<dbReference type="OMA" id="CVWSARN"/>
<dbReference type="PRO" id="PR:P34625"/>
<dbReference type="Proteomes" id="UP000001940">
    <property type="component" value="Chromosome III"/>
</dbReference>
<dbReference type="Bgee" id="WBGene00022698">
    <property type="expression patterns" value="Expressed in anatomical system and 4 other cell types or tissues"/>
</dbReference>
<dbReference type="InterPro" id="IPR022559">
    <property type="entry name" value="SUP-1-like"/>
</dbReference>
<dbReference type="PANTHER" id="PTHR34149">
    <property type="entry name" value="PROTEIN CBG11905-RELATED"/>
    <property type="match status" value="1"/>
</dbReference>
<dbReference type="PANTHER" id="PTHR34149:SF1">
    <property type="entry name" value="PROTEIN CBG18148"/>
    <property type="match status" value="1"/>
</dbReference>
<dbReference type="Pfam" id="PF10853">
    <property type="entry name" value="DUF2650"/>
    <property type="match status" value="1"/>
</dbReference>
<name>YOJ2_CAEEL</name>
<reference key="1">
    <citation type="journal article" date="1994" name="Nature">
        <title>2.2 Mb of contiguous nucleotide sequence from chromosome III of C. elegans.</title>
        <authorList>
            <person name="Wilson R."/>
            <person name="Ainscough R."/>
            <person name="Anderson K."/>
            <person name="Baynes C."/>
            <person name="Berks M."/>
            <person name="Bonfield J."/>
            <person name="Burton J."/>
            <person name="Connell M."/>
            <person name="Copsey T."/>
            <person name="Cooper J."/>
            <person name="Coulson A."/>
            <person name="Craxton M."/>
            <person name="Dear S."/>
            <person name="Du Z."/>
            <person name="Durbin R."/>
            <person name="Favello A."/>
            <person name="Fraser A."/>
            <person name="Fulton L."/>
            <person name="Gardner A."/>
            <person name="Green P."/>
            <person name="Hawkins T."/>
            <person name="Hillier L."/>
            <person name="Jier M."/>
            <person name="Johnston L."/>
            <person name="Jones M."/>
            <person name="Kershaw J."/>
            <person name="Kirsten J."/>
            <person name="Laisster N."/>
            <person name="Latreille P."/>
            <person name="Lightning J."/>
            <person name="Lloyd C."/>
            <person name="Mortimore B."/>
            <person name="O'Callaghan M."/>
            <person name="Parsons J."/>
            <person name="Percy C."/>
            <person name="Rifken L."/>
            <person name="Roopra A."/>
            <person name="Saunders D."/>
            <person name="Shownkeen R."/>
            <person name="Sims M."/>
            <person name="Smaldon N."/>
            <person name="Smith A."/>
            <person name="Smith M."/>
            <person name="Sonnhammer E."/>
            <person name="Staden R."/>
            <person name="Sulston J."/>
            <person name="Thierry-Mieg J."/>
            <person name="Thomas K."/>
            <person name="Vaudin M."/>
            <person name="Vaughan K."/>
            <person name="Waterston R."/>
            <person name="Watson A."/>
            <person name="Weinstock L."/>
            <person name="Wilkinson-Sproat J."/>
            <person name="Wohldman P."/>
        </authorList>
    </citation>
    <scope>NUCLEOTIDE SEQUENCE [LARGE SCALE GENOMIC DNA]</scope>
    <source>
        <strain>Bristol N2</strain>
    </source>
</reference>
<reference key="2">
    <citation type="journal article" date="1998" name="Science">
        <title>Genome sequence of the nematode C. elegans: a platform for investigating biology.</title>
        <authorList>
            <consortium name="The C. elegans sequencing consortium"/>
        </authorList>
    </citation>
    <scope>NUCLEOTIDE SEQUENCE [LARGE SCALE GENOMIC DNA]</scope>
    <source>
        <strain>Bristol N2</strain>
    </source>
</reference>
<keyword id="KW-1185">Reference proteome</keyword>
<proteinExistence type="predicted"/>
<organism>
    <name type="scientific">Caenorhabditis elegans</name>
    <dbReference type="NCBI Taxonomy" id="6239"/>
    <lineage>
        <taxon>Eukaryota</taxon>
        <taxon>Metazoa</taxon>
        <taxon>Ecdysozoa</taxon>
        <taxon>Nematoda</taxon>
        <taxon>Chromadorea</taxon>
        <taxon>Rhabditida</taxon>
        <taxon>Rhabditina</taxon>
        <taxon>Rhabditomorpha</taxon>
        <taxon>Rhabditoidea</taxon>
        <taxon>Rhabditidae</taxon>
        <taxon>Peloderinae</taxon>
        <taxon>Caenorhabditis</taxon>
    </lineage>
</organism>
<sequence length="99" mass="10561">MSYGYGGYGNCGGGILGSVLGMAGGMAGGYGGYGGYGGYGRCGADNVFYRWRCCDYSPYECCIQLETWVVVFLVIFIIGFFVCLCACLAGCVWSARNRE</sequence>